<proteinExistence type="inferred from homology"/>
<keyword id="KW-0963">Cytoplasm</keyword>
<keyword id="KW-0413">Isomerase</keyword>
<keyword id="KW-0414">Isoprene biosynthesis</keyword>
<keyword id="KW-0460">Magnesium</keyword>
<keyword id="KW-0464">Manganese</keyword>
<keyword id="KW-0479">Metal-binding</keyword>
<keyword id="KW-1185">Reference proteome</keyword>
<reference key="1">
    <citation type="journal article" date="2004" name="Proc. Natl. Acad. Sci. U.S.A.">
        <title>The complete genomic sequence of Nocardia farcinica IFM 10152.</title>
        <authorList>
            <person name="Ishikawa J."/>
            <person name="Yamashita A."/>
            <person name="Mikami Y."/>
            <person name="Hoshino Y."/>
            <person name="Kurita H."/>
            <person name="Hotta K."/>
            <person name="Shiba T."/>
            <person name="Hattori M."/>
        </authorList>
    </citation>
    <scope>NUCLEOTIDE SEQUENCE [LARGE SCALE GENOMIC DNA]</scope>
    <source>
        <strain>IFM 10152</strain>
    </source>
</reference>
<sequence>MPVELVDEAGRAVGACPVAEAHRDPGKLHRAFSVLLFDTAGRVLLQQRAAVKTRFPLLWANTCCGHPAPGESVEAAAATRLAEELGVAAGLTEVGVFRYRAADTATGRVEHEWDHVLIGTLDTTPHPDPAEVANLRWVRPAEVRAKLAAEPAAYTPWLAEVLEIADAAYRESAGR</sequence>
<comment type="function">
    <text evidence="1">Catalyzes the 1,3-allylic rearrangement of the homoallylic substrate isopentenyl (IPP) to its highly electrophilic allylic isomer, dimethylallyl diphosphate (DMAPP).</text>
</comment>
<comment type="catalytic activity">
    <reaction evidence="1">
        <text>isopentenyl diphosphate = dimethylallyl diphosphate</text>
        <dbReference type="Rhea" id="RHEA:23284"/>
        <dbReference type="ChEBI" id="CHEBI:57623"/>
        <dbReference type="ChEBI" id="CHEBI:128769"/>
        <dbReference type="EC" id="5.3.3.2"/>
    </reaction>
</comment>
<comment type="cofactor">
    <cofactor evidence="1">
        <name>Mg(2+)</name>
        <dbReference type="ChEBI" id="CHEBI:18420"/>
    </cofactor>
    <text evidence="1">Binds 1 Mg(2+) ion per subunit. The magnesium ion binds only when substrate is bound.</text>
</comment>
<comment type="cofactor">
    <cofactor evidence="1">
        <name>Mn(2+)</name>
        <dbReference type="ChEBI" id="CHEBI:29035"/>
    </cofactor>
    <text evidence="1">Binds 1 Mn(2+) ion per subunit.</text>
</comment>
<comment type="pathway">
    <text evidence="1">Isoprenoid biosynthesis; dimethylallyl diphosphate biosynthesis; dimethylallyl diphosphate from isopentenyl diphosphate: step 1/1.</text>
</comment>
<comment type="subcellular location">
    <subcellularLocation>
        <location evidence="1">Cytoplasm</location>
    </subcellularLocation>
</comment>
<comment type="similarity">
    <text evidence="1">Belongs to the IPP isomerase type 1 family.</text>
</comment>
<protein>
    <recommendedName>
        <fullName evidence="1">Isopentenyl-diphosphate Delta-isomerase</fullName>
        <shortName evidence="1">IPP isomerase</shortName>
        <ecNumber evidence="1">5.3.3.2</ecNumber>
    </recommendedName>
    <alternativeName>
        <fullName evidence="1">IPP:DMAPP isomerase</fullName>
    </alternativeName>
    <alternativeName>
        <fullName evidence="1">Isopentenyl pyrophosphate isomerase</fullName>
    </alternativeName>
</protein>
<dbReference type="EC" id="5.3.3.2" evidence="1"/>
<dbReference type="EMBL" id="AP006618">
    <property type="protein sequence ID" value="BAD56825.1"/>
    <property type="molecule type" value="Genomic_DNA"/>
</dbReference>
<dbReference type="SMR" id="Q5YYB6"/>
<dbReference type="STRING" id="247156.NFA_19790"/>
<dbReference type="KEGG" id="nfa:NFA_19790"/>
<dbReference type="eggNOG" id="COG1443">
    <property type="taxonomic scope" value="Bacteria"/>
</dbReference>
<dbReference type="HOGENOM" id="CLU_060552_2_1_11"/>
<dbReference type="OrthoDB" id="9809458at2"/>
<dbReference type="UniPathway" id="UPA00059">
    <property type="reaction ID" value="UER00104"/>
</dbReference>
<dbReference type="Proteomes" id="UP000006820">
    <property type="component" value="Chromosome"/>
</dbReference>
<dbReference type="GO" id="GO:0005737">
    <property type="term" value="C:cytoplasm"/>
    <property type="evidence" value="ECO:0007669"/>
    <property type="project" value="UniProtKB-SubCell"/>
</dbReference>
<dbReference type="GO" id="GO:0004452">
    <property type="term" value="F:isopentenyl-diphosphate delta-isomerase activity"/>
    <property type="evidence" value="ECO:0007669"/>
    <property type="project" value="UniProtKB-UniRule"/>
</dbReference>
<dbReference type="GO" id="GO:0046872">
    <property type="term" value="F:metal ion binding"/>
    <property type="evidence" value="ECO:0007669"/>
    <property type="project" value="UniProtKB-KW"/>
</dbReference>
<dbReference type="GO" id="GO:0050992">
    <property type="term" value="P:dimethylallyl diphosphate biosynthetic process"/>
    <property type="evidence" value="ECO:0007669"/>
    <property type="project" value="UniProtKB-UniRule"/>
</dbReference>
<dbReference type="GO" id="GO:0009240">
    <property type="term" value="P:isopentenyl diphosphate biosynthetic process"/>
    <property type="evidence" value="ECO:0007669"/>
    <property type="project" value="TreeGrafter"/>
</dbReference>
<dbReference type="CDD" id="cd02885">
    <property type="entry name" value="NUDIX_IPP_Isomerase"/>
    <property type="match status" value="1"/>
</dbReference>
<dbReference type="Gene3D" id="3.90.79.10">
    <property type="entry name" value="Nucleoside Triphosphate Pyrophosphohydrolase"/>
    <property type="match status" value="1"/>
</dbReference>
<dbReference type="HAMAP" id="MF_00202">
    <property type="entry name" value="Idi"/>
    <property type="match status" value="1"/>
</dbReference>
<dbReference type="InterPro" id="IPR056375">
    <property type="entry name" value="Idi_bact"/>
</dbReference>
<dbReference type="InterPro" id="IPR011876">
    <property type="entry name" value="IsopentenylPP_isomerase_typ1"/>
</dbReference>
<dbReference type="InterPro" id="IPR015797">
    <property type="entry name" value="NUDIX_hydrolase-like_dom_sf"/>
</dbReference>
<dbReference type="InterPro" id="IPR000086">
    <property type="entry name" value="NUDIX_hydrolase_dom"/>
</dbReference>
<dbReference type="NCBIfam" id="TIGR02150">
    <property type="entry name" value="IPP_isom_1"/>
    <property type="match status" value="1"/>
</dbReference>
<dbReference type="NCBIfam" id="NF002995">
    <property type="entry name" value="PRK03759.1"/>
    <property type="match status" value="1"/>
</dbReference>
<dbReference type="PANTHER" id="PTHR10885">
    <property type="entry name" value="ISOPENTENYL-DIPHOSPHATE DELTA-ISOMERASE"/>
    <property type="match status" value="1"/>
</dbReference>
<dbReference type="PANTHER" id="PTHR10885:SF0">
    <property type="entry name" value="ISOPENTENYL-DIPHOSPHATE DELTA-ISOMERASE"/>
    <property type="match status" value="1"/>
</dbReference>
<dbReference type="Pfam" id="PF00293">
    <property type="entry name" value="NUDIX"/>
    <property type="match status" value="1"/>
</dbReference>
<dbReference type="PIRSF" id="PIRSF018427">
    <property type="entry name" value="Isopntndiph_ism"/>
    <property type="match status" value="1"/>
</dbReference>
<dbReference type="SUPFAM" id="SSF55811">
    <property type="entry name" value="Nudix"/>
    <property type="match status" value="1"/>
</dbReference>
<dbReference type="PROSITE" id="PS51462">
    <property type="entry name" value="NUDIX"/>
    <property type="match status" value="1"/>
</dbReference>
<gene>
    <name evidence="1" type="primary">idi</name>
    <name type="ordered locus">NFA_19790</name>
</gene>
<feature type="chain" id="PRO_0000205255" description="Isopentenyl-diphosphate Delta-isomerase">
    <location>
        <begin position="1"/>
        <end position="175"/>
    </location>
</feature>
<feature type="domain" description="Nudix hydrolase">
    <location>
        <begin position="27"/>
        <end position="160"/>
    </location>
</feature>
<feature type="active site" evidence="1">
    <location>
        <position position="64"/>
    </location>
</feature>
<feature type="active site" evidence="1">
    <location>
        <position position="112"/>
    </location>
</feature>
<feature type="binding site" evidence="1">
    <location>
        <position position="22"/>
    </location>
    <ligand>
        <name>Mn(2+)</name>
        <dbReference type="ChEBI" id="CHEBI:29035"/>
    </ligand>
</feature>
<feature type="binding site" evidence="1">
    <location>
        <position position="29"/>
    </location>
    <ligand>
        <name>Mn(2+)</name>
        <dbReference type="ChEBI" id="CHEBI:29035"/>
    </ligand>
</feature>
<feature type="binding site" evidence="1">
    <location>
        <position position="64"/>
    </location>
    <ligand>
        <name>Mg(2+)</name>
        <dbReference type="ChEBI" id="CHEBI:18420"/>
    </ligand>
</feature>
<feature type="binding site" evidence="1">
    <location>
        <position position="66"/>
    </location>
    <ligand>
        <name>Mn(2+)</name>
        <dbReference type="ChEBI" id="CHEBI:29035"/>
    </ligand>
</feature>
<feature type="binding site" evidence="1">
    <location>
        <position position="84"/>
    </location>
    <ligand>
        <name>Mg(2+)</name>
        <dbReference type="ChEBI" id="CHEBI:18420"/>
    </ligand>
</feature>
<feature type="binding site" evidence="1">
    <location>
        <position position="110"/>
    </location>
    <ligand>
        <name>Mn(2+)</name>
        <dbReference type="ChEBI" id="CHEBI:29035"/>
    </ligand>
</feature>
<feature type="binding site" evidence="1">
    <location>
        <position position="112"/>
    </location>
    <ligand>
        <name>Mn(2+)</name>
        <dbReference type="ChEBI" id="CHEBI:29035"/>
    </ligand>
</feature>
<evidence type="ECO:0000255" key="1">
    <source>
        <dbReference type="HAMAP-Rule" id="MF_00202"/>
    </source>
</evidence>
<organism>
    <name type="scientific">Nocardia farcinica (strain IFM 10152)</name>
    <dbReference type="NCBI Taxonomy" id="247156"/>
    <lineage>
        <taxon>Bacteria</taxon>
        <taxon>Bacillati</taxon>
        <taxon>Actinomycetota</taxon>
        <taxon>Actinomycetes</taxon>
        <taxon>Mycobacteriales</taxon>
        <taxon>Nocardiaceae</taxon>
        <taxon>Nocardia</taxon>
    </lineage>
</organism>
<accession>Q5YYB6</accession>
<name>IDI_NOCFA</name>